<keyword id="KW-1185">Reference proteome</keyword>
<keyword id="KW-0687">Ribonucleoprotein</keyword>
<keyword id="KW-0689">Ribosomal protein</keyword>
<keyword id="KW-0694">RNA-binding</keyword>
<keyword id="KW-0699">rRNA-binding</keyword>
<keyword id="KW-0820">tRNA-binding</keyword>
<accession>O32995</accession>
<feature type="chain" id="PRO_0000124950" description="Large ribosomal subunit protein uL5">
    <location>
        <begin position="1"/>
        <end position="187"/>
    </location>
</feature>
<name>RL5_MYCLE</name>
<protein>
    <recommendedName>
        <fullName evidence="1">Large ribosomal subunit protein uL5</fullName>
    </recommendedName>
    <alternativeName>
        <fullName evidence="2">50S ribosomal protein L5</fullName>
    </alternativeName>
</protein>
<comment type="function">
    <text evidence="1">This is one of the proteins that bind and probably mediate the attachment of the 5S RNA into the large ribosomal subunit, where it forms part of the central protuberance. In the 70S ribosome it contacts protein S13 of the 30S subunit (bridge B1b), connecting the 2 subunits; this bridge is implicated in subunit movement. Contacts the P site tRNA; the 5S rRNA and some of its associated proteins might help stabilize positioning of ribosome-bound tRNAs.</text>
</comment>
<comment type="subunit">
    <text evidence="1">Part of the 50S ribosomal subunit; part of the 5S rRNA/L5/L18/L25 subcomplex. Contacts the 5S rRNA and the P site tRNA. Forms a bridge to the 30S subunit in the 70S ribosome.</text>
</comment>
<comment type="similarity">
    <text evidence="1">Belongs to the universal ribosomal protein uL5 family.</text>
</comment>
<proteinExistence type="inferred from homology"/>
<reference key="1">
    <citation type="journal article" date="2001" name="Nature">
        <title>Massive gene decay in the leprosy bacillus.</title>
        <authorList>
            <person name="Cole S.T."/>
            <person name="Eiglmeier K."/>
            <person name="Parkhill J."/>
            <person name="James K.D."/>
            <person name="Thomson N.R."/>
            <person name="Wheeler P.R."/>
            <person name="Honore N."/>
            <person name="Garnier T."/>
            <person name="Churcher C.M."/>
            <person name="Harris D.E."/>
            <person name="Mungall K.L."/>
            <person name="Basham D."/>
            <person name="Brown D."/>
            <person name="Chillingworth T."/>
            <person name="Connor R."/>
            <person name="Davies R.M."/>
            <person name="Devlin K."/>
            <person name="Duthoy S."/>
            <person name="Feltwell T."/>
            <person name="Fraser A."/>
            <person name="Hamlin N."/>
            <person name="Holroyd S."/>
            <person name="Hornsby T."/>
            <person name="Jagels K."/>
            <person name="Lacroix C."/>
            <person name="Maclean J."/>
            <person name="Moule S."/>
            <person name="Murphy L.D."/>
            <person name="Oliver K."/>
            <person name="Quail M.A."/>
            <person name="Rajandream M.A."/>
            <person name="Rutherford K.M."/>
            <person name="Rutter S."/>
            <person name="Seeger K."/>
            <person name="Simon S."/>
            <person name="Simmonds M."/>
            <person name="Skelton J."/>
            <person name="Squares R."/>
            <person name="Squares S."/>
            <person name="Stevens K."/>
            <person name="Taylor K."/>
            <person name="Whitehead S."/>
            <person name="Woodward J.R."/>
            <person name="Barrell B.G."/>
        </authorList>
    </citation>
    <scope>NUCLEOTIDE SEQUENCE [LARGE SCALE GENOMIC DNA]</scope>
    <source>
        <strain>TN</strain>
    </source>
</reference>
<evidence type="ECO:0000255" key="1">
    <source>
        <dbReference type="HAMAP-Rule" id="MF_01333"/>
    </source>
</evidence>
<evidence type="ECO:0000305" key="2"/>
<dbReference type="EMBL" id="Z98756">
    <property type="protein sequence ID" value="CAB11448.1"/>
    <property type="molecule type" value="Genomic_DNA"/>
</dbReference>
<dbReference type="EMBL" id="AL583923">
    <property type="protein sequence ID" value="CAC30801.1"/>
    <property type="molecule type" value="Genomic_DNA"/>
</dbReference>
<dbReference type="PIR" id="T45378">
    <property type="entry name" value="T45378"/>
</dbReference>
<dbReference type="RefSeq" id="NP_302253.1">
    <property type="nucleotide sequence ID" value="NC_002677.1"/>
</dbReference>
<dbReference type="RefSeq" id="WP_010908574.1">
    <property type="nucleotide sequence ID" value="NC_002677.1"/>
</dbReference>
<dbReference type="SMR" id="O32995"/>
<dbReference type="STRING" id="272631.gene:17575695"/>
<dbReference type="KEGG" id="mle:ML1847"/>
<dbReference type="PATRIC" id="fig|272631.5.peg.3497"/>
<dbReference type="Leproma" id="ML1847"/>
<dbReference type="eggNOG" id="COG0094">
    <property type="taxonomic scope" value="Bacteria"/>
</dbReference>
<dbReference type="HOGENOM" id="CLU_061015_2_1_11"/>
<dbReference type="OrthoDB" id="9806626at2"/>
<dbReference type="Proteomes" id="UP000000806">
    <property type="component" value="Chromosome"/>
</dbReference>
<dbReference type="GO" id="GO:1990904">
    <property type="term" value="C:ribonucleoprotein complex"/>
    <property type="evidence" value="ECO:0007669"/>
    <property type="project" value="UniProtKB-KW"/>
</dbReference>
<dbReference type="GO" id="GO:0005840">
    <property type="term" value="C:ribosome"/>
    <property type="evidence" value="ECO:0007669"/>
    <property type="project" value="UniProtKB-KW"/>
</dbReference>
<dbReference type="GO" id="GO:0019843">
    <property type="term" value="F:rRNA binding"/>
    <property type="evidence" value="ECO:0007669"/>
    <property type="project" value="UniProtKB-UniRule"/>
</dbReference>
<dbReference type="GO" id="GO:0003735">
    <property type="term" value="F:structural constituent of ribosome"/>
    <property type="evidence" value="ECO:0007669"/>
    <property type="project" value="InterPro"/>
</dbReference>
<dbReference type="GO" id="GO:0000049">
    <property type="term" value="F:tRNA binding"/>
    <property type="evidence" value="ECO:0007669"/>
    <property type="project" value="UniProtKB-UniRule"/>
</dbReference>
<dbReference type="GO" id="GO:0006412">
    <property type="term" value="P:translation"/>
    <property type="evidence" value="ECO:0007669"/>
    <property type="project" value="UniProtKB-UniRule"/>
</dbReference>
<dbReference type="FunFam" id="3.30.1440.10:FF:000001">
    <property type="entry name" value="50S ribosomal protein L5"/>
    <property type="match status" value="1"/>
</dbReference>
<dbReference type="Gene3D" id="3.30.1440.10">
    <property type="match status" value="1"/>
</dbReference>
<dbReference type="HAMAP" id="MF_01333_B">
    <property type="entry name" value="Ribosomal_uL5_B"/>
    <property type="match status" value="1"/>
</dbReference>
<dbReference type="InterPro" id="IPR002132">
    <property type="entry name" value="Ribosomal_uL5"/>
</dbReference>
<dbReference type="InterPro" id="IPR020930">
    <property type="entry name" value="Ribosomal_uL5_bac-type"/>
</dbReference>
<dbReference type="InterPro" id="IPR031309">
    <property type="entry name" value="Ribosomal_uL5_C"/>
</dbReference>
<dbReference type="InterPro" id="IPR022803">
    <property type="entry name" value="Ribosomal_uL5_dom_sf"/>
</dbReference>
<dbReference type="InterPro" id="IPR031310">
    <property type="entry name" value="Ribosomal_uL5_N"/>
</dbReference>
<dbReference type="NCBIfam" id="NF000585">
    <property type="entry name" value="PRK00010.1"/>
    <property type="match status" value="1"/>
</dbReference>
<dbReference type="PANTHER" id="PTHR11994">
    <property type="entry name" value="60S RIBOSOMAL PROTEIN L11-RELATED"/>
    <property type="match status" value="1"/>
</dbReference>
<dbReference type="Pfam" id="PF00281">
    <property type="entry name" value="Ribosomal_L5"/>
    <property type="match status" value="1"/>
</dbReference>
<dbReference type="Pfam" id="PF00673">
    <property type="entry name" value="Ribosomal_L5_C"/>
    <property type="match status" value="1"/>
</dbReference>
<dbReference type="PIRSF" id="PIRSF002161">
    <property type="entry name" value="Ribosomal_L5"/>
    <property type="match status" value="1"/>
</dbReference>
<dbReference type="SUPFAM" id="SSF55282">
    <property type="entry name" value="RL5-like"/>
    <property type="match status" value="1"/>
</dbReference>
<sequence>MSTAEKVQPRLKQRYRSEIREALNKQFSYGNVMQIPTVVKVVVNMGVGDAARDAKLINGAVSDLALITGQKPEVRKARKSIAQFKLREGMPIGVRVTLRDDRMWEFLDRLTSIALPRIRDFRGLSPKQFDGVGNYTFGLAEQSVFHEIDVDKIDRVRGMDINVVTSATTDDEGRALLRALGFPFKEN</sequence>
<gene>
    <name evidence="1" type="primary">rplE</name>
    <name type="ordered locus">ML1847</name>
    <name type="ORF">MLCB2492.16</name>
</gene>
<organism>
    <name type="scientific">Mycobacterium leprae (strain TN)</name>
    <dbReference type="NCBI Taxonomy" id="272631"/>
    <lineage>
        <taxon>Bacteria</taxon>
        <taxon>Bacillati</taxon>
        <taxon>Actinomycetota</taxon>
        <taxon>Actinomycetes</taxon>
        <taxon>Mycobacteriales</taxon>
        <taxon>Mycobacteriaceae</taxon>
        <taxon>Mycobacterium</taxon>
    </lineage>
</organism>